<name>HUTU_VIBCH</name>
<gene>
    <name evidence="1" type="primary">hutU</name>
    <name type="ordered locus">VC_1203</name>
</gene>
<feature type="chain" id="PRO_0000207363" description="Urocanate hydratase">
    <location>
        <begin position="1"/>
        <end position="565"/>
    </location>
</feature>
<feature type="active site" evidence="1">
    <location>
        <position position="413"/>
    </location>
</feature>
<feature type="binding site" evidence="1">
    <location>
        <begin position="58"/>
        <end position="59"/>
    </location>
    <ligand>
        <name>NAD(+)</name>
        <dbReference type="ChEBI" id="CHEBI:57540"/>
    </ligand>
</feature>
<feature type="binding site" evidence="1">
    <location>
        <position position="136"/>
    </location>
    <ligand>
        <name>NAD(+)</name>
        <dbReference type="ChEBI" id="CHEBI:57540"/>
    </ligand>
</feature>
<feature type="binding site" evidence="1">
    <location>
        <begin position="182"/>
        <end position="184"/>
    </location>
    <ligand>
        <name>NAD(+)</name>
        <dbReference type="ChEBI" id="CHEBI:57540"/>
    </ligand>
</feature>
<feature type="binding site" evidence="1">
    <location>
        <position position="202"/>
    </location>
    <ligand>
        <name>NAD(+)</name>
        <dbReference type="ChEBI" id="CHEBI:57540"/>
    </ligand>
</feature>
<feature type="binding site" evidence="1">
    <location>
        <position position="207"/>
    </location>
    <ligand>
        <name>NAD(+)</name>
        <dbReference type="ChEBI" id="CHEBI:57540"/>
    </ligand>
</feature>
<feature type="binding site" evidence="1">
    <location>
        <begin position="245"/>
        <end position="246"/>
    </location>
    <ligand>
        <name>NAD(+)</name>
        <dbReference type="ChEBI" id="CHEBI:57540"/>
    </ligand>
</feature>
<feature type="binding site" evidence="1">
    <location>
        <begin position="266"/>
        <end position="270"/>
    </location>
    <ligand>
        <name>NAD(+)</name>
        <dbReference type="ChEBI" id="CHEBI:57540"/>
    </ligand>
</feature>
<feature type="binding site" evidence="1">
    <location>
        <begin position="276"/>
        <end position="277"/>
    </location>
    <ligand>
        <name>NAD(+)</name>
        <dbReference type="ChEBI" id="CHEBI:57540"/>
    </ligand>
</feature>
<feature type="binding site" evidence="1">
    <location>
        <position position="325"/>
    </location>
    <ligand>
        <name>NAD(+)</name>
        <dbReference type="ChEBI" id="CHEBI:57540"/>
    </ligand>
</feature>
<feature type="binding site" evidence="1">
    <location>
        <position position="495"/>
    </location>
    <ligand>
        <name>NAD(+)</name>
        <dbReference type="ChEBI" id="CHEBI:57540"/>
    </ligand>
</feature>
<proteinExistence type="inferred from homology"/>
<keyword id="KW-0963">Cytoplasm</keyword>
<keyword id="KW-0369">Histidine metabolism</keyword>
<keyword id="KW-0456">Lyase</keyword>
<keyword id="KW-0520">NAD</keyword>
<keyword id="KW-1185">Reference proteome</keyword>
<reference key="1">
    <citation type="journal article" date="2000" name="Nature">
        <title>DNA sequence of both chromosomes of the cholera pathogen Vibrio cholerae.</title>
        <authorList>
            <person name="Heidelberg J.F."/>
            <person name="Eisen J.A."/>
            <person name="Nelson W.C."/>
            <person name="Clayton R.A."/>
            <person name="Gwinn M.L."/>
            <person name="Dodson R.J."/>
            <person name="Haft D.H."/>
            <person name="Hickey E.K."/>
            <person name="Peterson J.D."/>
            <person name="Umayam L.A."/>
            <person name="Gill S.R."/>
            <person name="Nelson K.E."/>
            <person name="Read T.D."/>
            <person name="Tettelin H."/>
            <person name="Richardson D.L."/>
            <person name="Ermolaeva M.D."/>
            <person name="Vamathevan J.J."/>
            <person name="Bass S."/>
            <person name="Qin H."/>
            <person name="Dragoi I."/>
            <person name="Sellers P."/>
            <person name="McDonald L.A."/>
            <person name="Utterback T.R."/>
            <person name="Fleischmann R.D."/>
            <person name="Nierman W.C."/>
            <person name="White O."/>
            <person name="Salzberg S.L."/>
            <person name="Smith H.O."/>
            <person name="Colwell R.R."/>
            <person name="Mekalanos J.J."/>
            <person name="Venter J.C."/>
            <person name="Fraser C.M."/>
        </authorList>
    </citation>
    <scope>NUCLEOTIDE SEQUENCE [LARGE SCALE GENOMIC DNA]</scope>
    <source>
        <strain>ATCC 39315 / El Tor Inaba N16961</strain>
    </source>
</reference>
<evidence type="ECO:0000255" key="1">
    <source>
        <dbReference type="HAMAP-Rule" id="MF_00577"/>
    </source>
</evidence>
<comment type="function">
    <text evidence="1">Catalyzes the conversion of urocanate to 4-imidazolone-5-propionate.</text>
</comment>
<comment type="catalytic activity">
    <reaction evidence="1">
        <text>4-imidazolone-5-propanoate = trans-urocanate + H2O</text>
        <dbReference type="Rhea" id="RHEA:13101"/>
        <dbReference type="ChEBI" id="CHEBI:15377"/>
        <dbReference type="ChEBI" id="CHEBI:17771"/>
        <dbReference type="ChEBI" id="CHEBI:77893"/>
        <dbReference type="EC" id="4.2.1.49"/>
    </reaction>
</comment>
<comment type="cofactor">
    <cofactor evidence="1">
        <name>NAD(+)</name>
        <dbReference type="ChEBI" id="CHEBI:57540"/>
    </cofactor>
    <text evidence="1">Binds 1 NAD(+) per subunit.</text>
</comment>
<comment type="pathway">
    <text evidence="1">Amino-acid degradation; L-histidine degradation into L-glutamate; N-formimidoyl-L-glutamate from L-histidine: step 2/3.</text>
</comment>
<comment type="subcellular location">
    <subcellularLocation>
        <location evidence="1">Cytoplasm</location>
    </subcellularLocation>
</comment>
<comment type="similarity">
    <text evidence="1">Belongs to the urocanase family.</text>
</comment>
<sequence length="565" mass="61824">MTQSSAQGTRLDTQRTIRAPRGTQLRAKSWLTEAPLRMLMNNLDPDVAEHPHALVVYGGIGRAARNWECFDKIVEVLERLEDDQTLLVQSGKPVGVFPTHKNAPRVLIANSNLVPHWANWEHFNELDKQGLMMYGQMTAGSWIYIGSQGIVQGTYETFVAVAKKHFNGDAKGRWVLTGGLGGMGGAQPLAATMAGFSMIAVECDESRIDYRLRTGYVDKKANTLDEALAMIADTDRPISVGLLGNAADIFPELVKRNITPDVVTDQTSAHDPLNGYLPLGWSMEKAAQMRQQNEAEVVKAAKASMAIQVRAMLDLQTRGAATLDYGNNIRQMALEEGVANAFDFPGFVPAYIRPLFCEGIGPFRWAALSGDPEDIYKTDQKVKELIPDNPHLHNWLDMARERIHFQGLPARICWVGLKDRARLGLAFNEMVKNGELKAPIVIGRDHLDSGSVASPNRETEGMLDGSDAVSDWPLLNALLNTAGGATWVSLHHGGGVGMGFSQHSGMVICCDGSDDAAERIARVLHNDPATGVMRHADAGYEIAKRCAQQQKLDLPMLNAELAKLK</sequence>
<organism>
    <name type="scientific">Vibrio cholerae serotype O1 (strain ATCC 39315 / El Tor Inaba N16961)</name>
    <dbReference type="NCBI Taxonomy" id="243277"/>
    <lineage>
        <taxon>Bacteria</taxon>
        <taxon>Pseudomonadati</taxon>
        <taxon>Pseudomonadota</taxon>
        <taxon>Gammaproteobacteria</taxon>
        <taxon>Vibrionales</taxon>
        <taxon>Vibrionaceae</taxon>
        <taxon>Vibrio</taxon>
    </lineage>
</organism>
<dbReference type="EC" id="4.2.1.49" evidence="1"/>
<dbReference type="EMBL" id="AE003852">
    <property type="protein sequence ID" value="AAF94362.1"/>
    <property type="molecule type" value="Genomic_DNA"/>
</dbReference>
<dbReference type="PIR" id="F82228">
    <property type="entry name" value="F82228"/>
</dbReference>
<dbReference type="RefSeq" id="NP_230848.1">
    <property type="nucleotide sequence ID" value="NC_002505.1"/>
</dbReference>
<dbReference type="RefSeq" id="WP_000194594.1">
    <property type="nucleotide sequence ID" value="NZ_LT906614.1"/>
</dbReference>
<dbReference type="SMR" id="Q9KSQ3"/>
<dbReference type="STRING" id="243277.VC_1203"/>
<dbReference type="DNASU" id="2614636"/>
<dbReference type="EnsemblBacteria" id="AAF94362">
    <property type="protein sequence ID" value="AAF94362"/>
    <property type="gene ID" value="VC_1203"/>
</dbReference>
<dbReference type="KEGG" id="vch:VC_1203"/>
<dbReference type="PATRIC" id="fig|243277.26.peg.1150"/>
<dbReference type="eggNOG" id="COG2987">
    <property type="taxonomic scope" value="Bacteria"/>
</dbReference>
<dbReference type="HOGENOM" id="CLU_018868_0_1_6"/>
<dbReference type="UniPathway" id="UPA00379">
    <property type="reaction ID" value="UER00550"/>
</dbReference>
<dbReference type="Proteomes" id="UP000000584">
    <property type="component" value="Chromosome 1"/>
</dbReference>
<dbReference type="GO" id="GO:0005737">
    <property type="term" value="C:cytoplasm"/>
    <property type="evidence" value="ECO:0007669"/>
    <property type="project" value="UniProtKB-SubCell"/>
</dbReference>
<dbReference type="GO" id="GO:0016153">
    <property type="term" value="F:urocanate hydratase activity"/>
    <property type="evidence" value="ECO:0000318"/>
    <property type="project" value="GO_Central"/>
</dbReference>
<dbReference type="GO" id="GO:0006548">
    <property type="term" value="P:L-histidine catabolic process"/>
    <property type="evidence" value="ECO:0000318"/>
    <property type="project" value="GO_Central"/>
</dbReference>
<dbReference type="GO" id="GO:0019556">
    <property type="term" value="P:L-histidine catabolic process to glutamate and formamide"/>
    <property type="evidence" value="ECO:0007669"/>
    <property type="project" value="UniProtKB-UniPathway"/>
</dbReference>
<dbReference type="GO" id="GO:0019557">
    <property type="term" value="P:L-histidine catabolic process to glutamate and formate"/>
    <property type="evidence" value="ECO:0007669"/>
    <property type="project" value="UniProtKB-UniPathway"/>
</dbReference>
<dbReference type="FunFam" id="3.40.50.10730:FF:000001">
    <property type="entry name" value="Urocanate hydratase"/>
    <property type="match status" value="1"/>
</dbReference>
<dbReference type="Gene3D" id="3.40.50.10730">
    <property type="entry name" value="Urocanase like domains"/>
    <property type="match status" value="1"/>
</dbReference>
<dbReference type="Gene3D" id="3.40.1770.10">
    <property type="entry name" value="Urocanase superfamily"/>
    <property type="match status" value="1"/>
</dbReference>
<dbReference type="HAMAP" id="MF_00577">
    <property type="entry name" value="HutU"/>
    <property type="match status" value="1"/>
</dbReference>
<dbReference type="InterPro" id="IPR055351">
    <property type="entry name" value="Urocanase"/>
</dbReference>
<dbReference type="InterPro" id="IPR023637">
    <property type="entry name" value="Urocanase-like"/>
</dbReference>
<dbReference type="InterPro" id="IPR035401">
    <property type="entry name" value="Urocanase_C"/>
</dbReference>
<dbReference type="InterPro" id="IPR038364">
    <property type="entry name" value="Urocanase_central_sf"/>
</dbReference>
<dbReference type="InterPro" id="IPR023636">
    <property type="entry name" value="Urocanase_CS"/>
</dbReference>
<dbReference type="InterPro" id="IPR035400">
    <property type="entry name" value="Urocanase_N"/>
</dbReference>
<dbReference type="InterPro" id="IPR035085">
    <property type="entry name" value="Urocanase_Rossmann-like"/>
</dbReference>
<dbReference type="InterPro" id="IPR036190">
    <property type="entry name" value="Urocanase_sf"/>
</dbReference>
<dbReference type="NCBIfam" id="TIGR01228">
    <property type="entry name" value="hutU"/>
    <property type="match status" value="1"/>
</dbReference>
<dbReference type="NCBIfam" id="NF003820">
    <property type="entry name" value="PRK05414.1"/>
    <property type="match status" value="1"/>
</dbReference>
<dbReference type="PANTHER" id="PTHR12216">
    <property type="entry name" value="UROCANATE HYDRATASE"/>
    <property type="match status" value="1"/>
</dbReference>
<dbReference type="PANTHER" id="PTHR12216:SF4">
    <property type="entry name" value="UROCANATE HYDRATASE"/>
    <property type="match status" value="1"/>
</dbReference>
<dbReference type="Pfam" id="PF01175">
    <property type="entry name" value="Urocanase"/>
    <property type="match status" value="1"/>
</dbReference>
<dbReference type="Pfam" id="PF17392">
    <property type="entry name" value="Urocanase_C"/>
    <property type="match status" value="1"/>
</dbReference>
<dbReference type="Pfam" id="PF17391">
    <property type="entry name" value="Urocanase_N"/>
    <property type="match status" value="1"/>
</dbReference>
<dbReference type="PIRSF" id="PIRSF001423">
    <property type="entry name" value="Urocanate_hydrat"/>
    <property type="match status" value="1"/>
</dbReference>
<dbReference type="SUPFAM" id="SSF111326">
    <property type="entry name" value="Urocanase"/>
    <property type="match status" value="1"/>
</dbReference>
<dbReference type="PROSITE" id="PS01233">
    <property type="entry name" value="UROCANASE"/>
    <property type="match status" value="1"/>
</dbReference>
<protein>
    <recommendedName>
        <fullName evidence="1">Urocanate hydratase</fullName>
        <shortName evidence="1">Urocanase</shortName>
        <ecNumber evidence="1">4.2.1.49</ecNumber>
    </recommendedName>
    <alternativeName>
        <fullName evidence="1">Imidazolonepropionate hydrolase</fullName>
    </alternativeName>
</protein>
<accession>Q9KSQ3</accession>